<name>GRPA_ALKPO</name>
<comment type="sequence caution" evidence="1">
    <conflict type="erroneous initiation">
        <sequence resource="EMBL-CDS" id="AAB05371"/>
    </conflict>
    <text>Extended N-terminus.</text>
</comment>
<comment type="sequence caution" evidence="1">
    <conflict type="frameshift">
        <sequence resource="EMBL-CDS" id="AAB05371"/>
    </conflict>
</comment>
<sequence length="159" mass="18843">MINSEFSIEEHVKYAERLQDERGLTKEDADEEAFRVQLNEVAVINRAIDVGINVSEEEAFQKSQETREDLENEEAENVKEVLIGIQEEIEQLGISEDDYWNEYMLSSYAHAVMREKLMEYEQNENPMKNWNELQQEIIEEFTVSQSQQINEFKREIGMR</sequence>
<feature type="chain" id="PRO_0000083859" description="Glutamate-rich protein GrpA">
    <location>
        <begin position="1"/>
        <end position="159"/>
    </location>
</feature>
<organism>
    <name type="scientific">Alkalihalophilus pseudofirmus (strain ATCC BAA-2126 / JCM 17055 / OF4)</name>
    <name type="common">Bacillus pseudofirmus</name>
    <dbReference type="NCBI Taxonomy" id="398511"/>
    <lineage>
        <taxon>Bacteria</taxon>
        <taxon>Bacillati</taxon>
        <taxon>Bacillota</taxon>
        <taxon>Bacilli</taxon>
        <taxon>Bacillales</taxon>
        <taxon>Bacillaceae</taxon>
        <taxon>Alkalihalophilus</taxon>
    </lineage>
</organism>
<evidence type="ECO:0000305" key="1"/>
<proteinExistence type="predicted"/>
<accession>Q45131</accession>
<accession>D3G1H7</accession>
<protein>
    <recommendedName>
        <fullName>Glutamate-rich protein GrpA</fullName>
    </recommendedName>
</protein>
<keyword id="KW-0614">Plasmid</keyword>
<keyword id="KW-1185">Reference proteome</keyword>
<geneLocation type="plasmid">
    <name>pBpOF4-01</name>
</geneLocation>
<reference key="1">
    <citation type="journal article" date="1996" name="J. Bacteriol.">
        <title>Purification of a cytochrome bd terminal oxidase encoded by the Escherichia coli app locus from a delta cyo delta cyd strain complemented by genes from Bacillus firmus OF4.</title>
        <authorList>
            <person name="Sturr M.G."/>
            <person name="Krulwich T.A."/>
            <person name="Hicks D.B."/>
        </authorList>
    </citation>
    <scope>NUCLEOTIDE SEQUENCE [GENOMIC DNA]</scope>
</reference>
<reference key="2">
    <citation type="journal article" date="2011" name="Environ. Microbiol.">
        <title>Genome of alkaliphilic Bacillus pseudofirmus OF4 reveals adaptations that support the ability to grow in an external pH range from 7.5 to 11.4.</title>
        <authorList>
            <person name="Janto B."/>
            <person name="Ahmed A."/>
            <person name="Ito M."/>
            <person name="Liu J."/>
            <person name="Hicks D.B."/>
            <person name="Pagni S."/>
            <person name="Fackelmayer O.J."/>
            <person name="Smith T.A."/>
            <person name="Earl J."/>
            <person name="Elbourne L.D."/>
            <person name="Hassan K."/>
            <person name="Paulsen I.T."/>
            <person name="Kolsto A.B."/>
            <person name="Tourasse N.J."/>
            <person name="Ehrlich G.D."/>
            <person name="Boissy R."/>
            <person name="Ivey D.M."/>
            <person name="Li G."/>
            <person name="Xue Y."/>
            <person name="Ma Y."/>
            <person name="Hu F.Z."/>
            <person name="Krulwich T.A."/>
        </authorList>
    </citation>
    <scope>NUCLEOTIDE SEQUENCE [LARGE SCALE GENOMIC DNA]</scope>
    <source>
        <strain>ATCC BAA-2126 / JCM 17055 / OF4</strain>
        <plasmid>pBpOF4-01</plasmid>
    </source>
</reference>
<gene>
    <name type="primary">grpA</name>
    <name type="ordered locus">BpOF4_21039</name>
</gene>
<dbReference type="EMBL" id="U39410">
    <property type="protein sequence ID" value="AAB05371.1"/>
    <property type="status" value="ALT_SEQ"/>
    <property type="molecule type" value="Genomic_DNA"/>
</dbReference>
<dbReference type="EMBL" id="CP001879">
    <property type="protein sequence ID" value="ADC52203.1"/>
    <property type="molecule type" value="Genomic_DNA"/>
</dbReference>
<dbReference type="SMR" id="Q45131"/>
<dbReference type="KEGG" id="bpf:BpOF4_21039"/>
<dbReference type="HOGENOM" id="CLU_1657333_0_0_9"/>
<dbReference type="Proteomes" id="UP000001544">
    <property type="component" value="Plasmid pBpOF4-01"/>
</dbReference>